<reference key="1">
    <citation type="journal article" date="1998" name="Science">
        <title>Genome sequence of the nematode C. elegans: a platform for investigating biology.</title>
        <authorList>
            <consortium name="The C. elegans sequencing consortium"/>
        </authorList>
    </citation>
    <scope>NUCLEOTIDE SEQUENCE [LARGE SCALE GENOMIC DNA]</scope>
    <source>
        <strain>Bristol N2</strain>
    </source>
</reference>
<evidence type="ECO:0000255" key="1">
    <source>
        <dbReference type="HAMAP-Rule" id="MF_03122"/>
    </source>
</evidence>
<evidence type="ECO:0000256" key="2">
    <source>
        <dbReference type="SAM" id="MobiDB-lite"/>
    </source>
</evidence>
<evidence type="ECO:0000305" key="3"/>
<evidence type="ECO:0000312" key="4">
    <source>
        <dbReference type="WormBase" id="F56F3.5"/>
    </source>
</evidence>
<comment type="subunit">
    <text evidence="1">Component of the small ribosomal subunit. Mature ribosomes consist of a small (40S) and a large (60S) subunit. The 40S subunit contains about 33 different proteins and 1 molecule of RNA (18S). The 60S subunit contains about 49 different proteins and 3 molecules of RNA (28S, 5.8S and 5S).</text>
</comment>
<comment type="subcellular location">
    <subcellularLocation>
        <location evidence="1">Cytoplasm</location>
    </subcellularLocation>
</comment>
<comment type="similarity">
    <text evidence="1">Belongs to the eukaryotic ribosomal protein eS1 family.</text>
</comment>
<sequence>MAVGKNNNKMGKKGGKKKAVDPFSRKEWYDIKAPNMFNTRQVGKTLINRTQGTKIASEGLKGRVFEVSLGDLNNSEADFRKFKLIAEDVQGKNVLTNFHAMSMTHDKLCSIVKKWHTLIEANTAVKTTDGYTLRVFVIAFTKKSVNQVKKTSYTKTSKIRKIRSEMIGCIEKEVTGCDLKEVVSKLIPDSIGKDIEKTCSKLYPLQEVYIRKVKIIKRPKVDLGRLHDLHGDSITVGADGEKVDRPDDYEPPVQQEV</sequence>
<accession>P48154</accession>
<dbReference type="EMBL" id="Z32681">
    <property type="protein sequence ID" value="CAA83605.1"/>
    <property type="molecule type" value="Genomic_DNA"/>
</dbReference>
<dbReference type="PIR" id="S43584">
    <property type="entry name" value="S43584"/>
</dbReference>
<dbReference type="RefSeq" id="NP_497910.1">
    <property type="nucleotide sequence ID" value="NM_065509.9"/>
</dbReference>
<dbReference type="PDB" id="9BH5">
    <property type="method" value="EM"/>
    <property type="resolution" value="2.63 A"/>
    <property type="chains" value="AB=1-257"/>
</dbReference>
<dbReference type="PDB" id="9CAI">
    <property type="method" value="EM"/>
    <property type="resolution" value="2.59 A"/>
    <property type="chains" value="AB=1-257"/>
</dbReference>
<dbReference type="PDBsum" id="9BH5"/>
<dbReference type="PDBsum" id="9CAI"/>
<dbReference type="EMDB" id="EMD-44533"/>
<dbReference type="EMDB" id="EMD-45392"/>
<dbReference type="SMR" id="P48154"/>
<dbReference type="BioGRID" id="40820">
    <property type="interactions" value="97"/>
</dbReference>
<dbReference type="DIP" id="DIP-25062N"/>
<dbReference type="FunCoup" id="P48154">
    <property type="interactions" value="1490"/>
</dbReference>
<dbReference type="IntAct" id="P48154">
    <property type="interactions" value="1"/>
</dbReference>
<dbReference type="STRING" id="6239.F56F3.5.2"/>
<dbReference type="iPTMnet" id="P48154"/>
<dbReference type="PaxDb" id="6239-F56F3.5"/>
<dbReference type="PeptideAtlas" id="P48154"/>
<dbReference type="EnsemblMetazoa" id="F56F3.5.1">
    <property type="protein sequence ID" value="F56F3.5.1"/>
    <property type="gene ID" value="WBGene00004470"/>
</dbReference>
<dbReference type="GeneID" id="175584"/>
<dbReference type="KEGG" id="cel:CELE_F56F3.5"/>
<dbReference type="UCSC" id="F56F3.5">
    <property type="organism name" value="c. elegans"/>
</dbReference>
<dbReference type="AGR" id="WB:WBGene00004470"/>
<dbReference type="CTD" id="175584"/>
<dbReference type="WormBase" id="F56F3.5">
    <property type="protein sequence ID" value="CE00664"/>
    <property type="gene ID" value="WBGene00004470"/>
    <property type="gene designation" value="rps-3A"/>
</dbReference>
<dbReference type="eggNOG" id="KOG1628">
    <property type="taxonomic scope" value="Eukaryota"/>
</dbReference>
<dbReference type="GeneTree" id="ENSGT00390000018433"/>
<dbReference type="HOGENOM" id="CLU_062507_0_1_1"/>
<dbReference type="InParanoid" id="P48154"/>
<dbReference type="OMA" id="TRFKGHE"/>
<dbReference type="OrthoDB" id="9834376at2759"/>
<dbReference type="PhylomeDB" id="P48154"/>
<dbReference type="Reactome" id="R-CEL-156827">
    <property type="pathway name" value="L13a-mediated translational silencing of Ceruloplasmin expression"/>
</dbReference>
<dbReference type="Reactome" id="R-CEL-1799339">
    <property type="pathway name" value="SRP-dependent cotranslational protein targeting to membrane"/>
</dbReference>
<dbReference type="Reactome" id="R-CEL-72649">
    <property type="pathway name" value="Translation initiation complex formation"/>
</dbReference>
<dbReference type="Reactome" id="R-CEL-72689">
    <property type="pathway name" value="Formation of a pool of free 40S subunits"/>
</dbReference>
<dbReference type="Reactome" id="R-CEL-72695">
    <property type="pathway name" value="Formation of the ternary complex, and subsequently, the 43S complex"/>
</dbReference>
<dbReference type="Reactome" id="R-CEL-72702">
    <property type="pathway name" value="Ribosomal scanning and start codon recognition"/>
</dbReference>
<dbReference type="Reactome" id="R-CEL-72706">
    <property type="pathway name" value="GTP hydrolysis and joining of the 60S ribosomal subunit"/>
</dbReference>
<dbReference type="Reactome" id="R-CEL-975956">
    <property type="pathway name" value="Nonsense Mediated Decay (NMD) independent of the Exon Junction Complex (EJC)"/>
</dbReference>
<dbReference type="Reactome" id="R-CEL-975957">
    <property type="pathway name" value="Nonsense Mediated Decay (NMD) enhanced by the Exon Junction Complex (EJC)"/>
</dbReference>
<dbReference type="PRO" id="PR:P48154"/>
<dbReference type="Proteomes" id="UP000001940">
    <property type="component" value="Chromosome III"/>
</dbReference>
<dbReference type="Bgee" id="WBGene00004470">
    <property type="expression patterns" value="Expressed in germ line (C elegans) and 4 other cell types or tissues"/>
</dbReference>
<dbReference type="GO" id="GO:0005829">
    <property type="term" value="C:cytosol"/>
    <property type="evidence" value="ECO:0000318"/>
    <property type="project" value="GO_Central"/>
</dbReference>
<dbReference type="GO" id="GO:0022627">
    <property type="term" value="C:cytosolic small ribosomal subunit"/>
    <property type="evidence" value="ECO:0007669"/>
    <property type="project" value="UniProtKB-UniRule"/>
</dbReference>
<dbReference type="GO" id="GO:0003735">
    <property type="term" value="F:structural constituent of ribosome"/>
    <property type="evidence" value="ECO:0007669"/>
    <property type="project" value="UniProtKB-UniRule"/>
</dbReference>
<dbReference type="GO" id="GO:0006412">
    <property type="term" value="P:translation"/>
    <property type="evidence" value="ECO:0007669"/>
    <property type="project" value="UniProtKB-UniRule"/>
</dbReference>
<dbReference type="HAMAP" id="MF_03122">
    <property type="entry name" value="Ribosomal_eS1_euk"/>
    <property type="match status" value="1"/>
</dbReference>
<dbReference type="InterPro" id="IPR001593">
    <property type="entry name" value="Ribosomal_eS1"/>
</dbReference>
<dbReference type="InterPro" id="IPR018281">
    <property type="entry name" value="Ribosomal_eS1_CS"/>
</dbReference>
<dbReference type="InterPro" id="IPR027500">
    <property type="entry name" value="Ribosomal_eS1_euk"/>
</dbReference>
<dbReference type="PANTHER" id="PTHR11830">
    <property type="entry name" value="40S RIBOSOMAL PROTEIN S3A"/>
    <property type="match status" value="1"/>
</dbReference>
<dbReference type="Pfam" id="PF01015">
    <property type="entry name" value="Ribosomal_S3Ae"/>
    <property type="match status" value="1"/>
</dbReference>
<dbReference type="SMART" id="SM01397">
    <property type="entry name" value="Ribosomal_S3Ae"/>
    <property type="match status" value="1"/>
</dbReference>
<dbReference type="PROSITE" id="PS01191">
    <property type="entry name" value="RIBOSOMAL_S3AE"/>
    <property type="match status" value="1"/>
</dbReference>
<gene>
    <name evidence="1 4" type="primary">rps-3A</name>
    <name type="ORF">F56F3.5</name>
</gene>
<protein>
    <recommendedName>
        <fullName evidence="1">Small ribosomal subunit protein eS1</fullName>
    </recommendedName>
    <alternativeName>
        <fullName evidence="3">40S ribosomal protein S3a</fullName>
    </alternativeName>
</protein>
<proteinExistence type="evidence at protein level"/>
<organism>
    <name type="scientific">Caenorhabditis elegans</name>
    <dbReference type="NCBI Taxonomy" id="6239"/>
    <lineage>
        <taxon>Eukaryota</taxon>
        <taxon>Metazoa</taxon>
        <taxon>Ecdysozoa</taxon>
        <taxon>Nematoda</taxon>
        <taxon>Chromadorea</taxon>
        <taxon>Rhabditida</taxon>
        <taxon>Rhabditina</taxon>
        <taxon>Rhabditomorpha</taxon>
        <taxon>Rhabditoidea</taxon>
        <taxon>Rhabditidae</taxon>
        <taxon>Peloderinae</taxon>
        <taxon>Caenorhabditis</taxon>
    </lineage>
</organism>
<name>RS3A_CAEEL</name>
<feature type="initiator methionine" description="Removed" evidence="1">
    <location>
        <position position="1"/>
    </location>
</feature>
<feature type="chain" id="PRO_0000153530" description="Small ribosomal subunit protein eS1">
    <location>
        <begin position="2"/>
        <end position="257"/>
    </location>
</feature>
<feature type="region of interest" description="Disordered" evidence="2">
    <location>
        <begin position="237"/>
        <end position="257"/>
    </location>
</feature>
<feature type="compositionally biased region" description="Basic and acidic residues" evidence="2">
    <location>
        <begin position="239"/>
        <end position="248"/>
    </location>
</feature>
<keyword id="KW-0002">3D-structure</keyword>
<keyword id="KW-0963">Cytoplasm</keyword>
<keyword id="KW-1185">Reference proteome</keyword>
<keyword id="KW-0687">Ribonucleoprotein</keyword>
<keyword id="KW-0689">Ribosomal protein</keyword>